<organism>
    <name type="scientific">Ailuropoda melanoleuca</name>
    <name type="common">Giant panda</name>
    <dbReference type="NCBI Taxonomy" id="9646"/>
    <lineage>
        <taxon>Eukaryota</taxon>
        <taxon>Metazoa</taxon>
        <taxon>Chordata</taxon>
        <taxon>Craniata</taxon>
        <taxon>Vertebrata</taxon>
        <taxon>Euteleostomi</taxon>
        <taxon>Mammalia</taxon>
        <taxon>Eutheria</taxon>
        <taxon>Laurasiatheria</taxon>
        <taxon>Carnivora</taxon>
        <taxon>Caniformia</taxon>
        <taxon>Ursidae</taxon>
        <taxon>Ailuropoda</taxon>
    </lineage>
</organism>
<sequence>MAEEQEFTQLCKLPVQPSHPHCVNNTYRSAQHSQALLRGLLALRDSGILFDVVLVVEGRHIEAHRILLAASCDYFRGMFAGGLKEMEQEEVLIHGVSYNAMCQILHFIYTSELELSLSNVQETLVAACQLQIPEIIHFCCDFLMSWVDEENILDVYRLAELFDLSRLTEQLDTYILKNFVAFSRTDKYRQLPLEKVYSLLSSNRLEVSCETEVYEGALLYHYTLEQVQADQISLHEPPKLLETVRFPLMEAEVLQRLHDKLDPSPLRDTVANALMYHRNESLQPSLQGPHTELRSDFQCVVGFGGIHSTPSTVLSDQAKYLNPLLGEWKHFTASLAPRMSNQGIAVLNNFVYLIGGDNNVQGFRAESRCWRYDPRHNRWFQIQSLQQEHADLCVCVVGRYIYAVAGRDYHNDLNAVERYDPTTNSWAYVAPLKREVYAHAGATLEGKMYVTCGRRGEDYLKETHCYDPDSNTWHSLADGPVRRAWHGMATLLDKLYVIGGSNNDAGYRRDVHQVACYSCTSGQWSSVCPLPAGHGEPGIAVLDTRIYVLGGRSHNRGSRTGYVHIYDVEKDCWEEGPQLDNSISGLAACVLTLPRTLLLEPPRGTPDRSQADPDFASEVMSVSDWEEFDNSSED</sequence>
<proteinExistence type="inferred from homology"/>
<accession>D2HEW7</accession>
<name>KLH22_AILME</name>
<keyword id="KW-0007">Acetylation</keyword>
<keyword id="KW-0131">Cell cycle</keyword>
<keyword id="KW-0132">Cell division</keyword>
<keyword id="KW-0963">Cytoplasm</keyword>
<keyword id="KW-0206">Cytoskeleton</keyword>
<keyword id="KW-0880">Kelch repeat</keyword>
<keyword id="KW-0458">Lysosome</keyword>
<keyword id="KW-0498">Mitosis</keyword>
<keyword id="KW-0539">Nucleus</keyword>
<keyword id="KW-0597">Phosphoprotein</keyword>
<keyword id="KW-1185">Reference proteome</keyword>
<keyword id="KW-0677">Repeat</keyword>
<keyword id="KW-0833">Ubl conjugation pathway</keyword>
<dbReference type="EMBL" id="GL192766">
    <property type="protein sequence ID" value="EFB29357.1"/>
    <property type="molecule type" value="Genomic_DNA"/>
</dbReference>
<dbReference type="SMR" id="D2HEW7"/>
<dbReference type="STRING" id="9646.ENSAMEP00000011753"/>
<dbReference type="eggNOG" id="KOG4441">
    <property type="taxonomic scope" value="Eukaryota"/>
</dbReference>
<dbReference type="HOGENOM" id="CLU_004253_14_3_1"/>
<dbReference type="InParanoid" id="D2HEW7"/>
<dbReference type="OMA" id="ACYKPST"/>
<dbReference type="TreeFam" id="TF328485"/>
<dbReference type="UniPathway" id="UPA00143"/>
<dbReference type="Proteomes" id="UP000008912">
    <property type="component" value="Unassembled WGS sequence"/>
</dbReference>
<dbReference type="GO" id="GO:0005813">
    <property type="term" value="C:centrosome"/>
    <property type="evidence" value="ECO:0000250"/>
    <property type="project" value="UniProtKB"/>
</dbReference>
<dbReference type="GO" id="GO:0031463">
    <property type="term" value="C:Cul3-RING ubiquitin ligase complex"/>
    <property type="evidence" value="ECO:0000250"/>
    <property type="project" value="UniProtKB"/>
</dbReference>
<dbReference type="GO" id="GO:0005737">
    <property type="term" value="C:cytoplasm"/>
    <property type="evidence" value="ECO:0000250"/>
    <property type="project" value="UniProtKB"/>
</dbReference>
<dbReference type="GO" id="GO:0005829">
    <property type="term" value="C:cytosol"/>
    <property type="evidence" value="ECO:0000250"/>
    <property type="project" value="UniProtKB"/>
</dbReference>
<dbReference type="GO" id="GO:0005764">
    <property type="term" value="C:lysosome"/>
    <property type="evidence" value="ECO:0007669"/>
    <property type="project" value="UniProtKB-SubCell"/>
</dbReference>
<dbReference type="GO" id="GO:0072686">
    <property type="term" value="C:mitotic spindle"/>
    <property type="evidence" value="ECO:0000250"/>
    <property type="project" value="UniProtKB"/>
</dbReference>
<dbReference type="GO" id="GO:0005634">
    <property type="term" value="C:nucleus"/>
    <property type="evidence" value="ECO:0007669"/>
    <property type="project" value="UniProtKB-SubCell"/>
</dbReference>
<dbReference type="GO" id="GO:0005827">
    <property type="term" value="C:polar microtubule"/>
    <property type="evidence" value="ECO:0000250"/>
    <property type="project" value="UniProtKB"/>
</dbReference>
<dbReference type="GO" id="GO:0051301">
    <property type="term" value="P:cell division"/>
    <property type="evidence" value="ECO:0000250"/>
    <property type="project" value="UniProtKB"/>
</dbReference>
<dbReference type="GO" id="GO:0071233">
    <property type="term" value="P:cellular response to L-leucine"/>
    <property type="evidence" value="ECO:0000250"/>
    <property type="project" value="UniProtKB"/>
</dbReference>
<dbReference type="GO" id="GO:0000070">
    <property type="term" value="P:mitotic sister chromatid segregation"/>
    <property type="evidence" value="ECO:0000250"/>
    <property type="project" value="UniProtKB"/>
</dbReference>
<dbReference type="GO" id="GO:0007094">
    <property type="term" value="P:mitotic spindle assembly checkpoint signaling"/>
    <property type="evidence" value="ECO:0000250"/>
    <property type="project" value="UniProtKB"/>
</dbReference>
<dbReference type="GO" id="GO:0010507">
    <property type="term" value="P:negative regulation of autophagy"/>
    <property type="evidence" value="ECO:0000250"/>
    <property type="project" value="UniProtKB"/>
</dbReference>
<dbReference type="GO" id="GO:0030307">
    <property type="term" value="P:positive regulation of cell growth"/>
    <property type="evidence" value="ECO:0000250"/>
    <property type="project" value="UniProtKB"/>
</dbReference>
<dbReference type="GO" id="GO:1904263">
    <property type="term" value="P:positive regulation of TORC1 signaling"/>
    <property type="evidence" value="ECO:0000250"/>
    <property type="project" value="UniProtKB"/>
</dbReference>
<dbReference type="GO" id="GO:0043161">
    <property type="term" value="P:proteasome-mediated ubiquitin-dependent protein catabolic process"/>
    <property type="evidence" value="ECO:0000250"/>
    <property type="project" value="UniProtKB"/>
</dbReference>
<dbReference type="GO" id="GO:0006513">
    <property type="term" value="P:protein monoubiquitination"/>
    <property type="evidence" value="ECO:0000250"/>
    <property type="project" value="UniProtKB"/>
</dbReference>
<dbReference type="CDD" id="cd18461">
    <property type="entry name" value="BACK_KLHL22"/>
    <property type="match status" value="1"/>
</dbReference>
<dbReference type="CDD" id="cd18251">
    <property type="entry name" value="BTB_POZ_KLHL22"/>
    <property type="match status" value="1"/>
</dbReference>
<dbReference type="FunFam" id="1.25.40.420:FF:000018">
    <property type="entry name" value="Kelch-like family member 22"/>
    <property type="match status" value="1"/>
</dbReference>
<dbReference type="FunFam" id="2.120.10.80:FF:000040">
    <property type="entry name" value="Kelch-like family member 22"/>
    <property type="match status" value="1"/>
</dbReference>
<dbReference type="FunFam" id="3.30.710.10:FF:000083">
    <property type="entry name" value="Kelch-like family member 22"/>
    <property type="match status" value="1"/>
</dbReference>
<dbReference type="Gene3D" id="1.25.40.420">
    <property type="match status" value="1"/>
</dbReference>
<dbReference type="Gene3D" id="2.120.10.80">
    <property type="entry name" value="Kelch-type beta propeller"/>
    <property type="match status" value="1"/>
</dbReference>
<dbReference type="Gene3D" id="3.30.710.10">
    <property type="entry name" value="Potassium Channel Kv1.1, Chain A"/>
    <property type="match status" value="1"/>
</dbReference>
<dbReference type="InterPro" id="IPR011705">
    <property type="entry name" value="BACK"/>
</dbReference>
<dbReference type="InterPro" id="IPR017096">
    <property type="entry name" value="BTB-kelch_protein"/>
</dbReference>
<dbReference type="InterPro" id="IPR000210">
    <property type="entry name" value="BTB/POZ_dom"/>
</dbReference>
<dbReference type="InterPro" id="IPR015915">
    <property type="entry name" value="Kelch-typ_b-propeller"/>
</dbReference>
<dbReference type="InterPro" id="IPR006652">
    <property type="entry name" value="Kelch_1"/>
</dbReference>
<dbReference type="InterPro" id="IPR030575">
    <property type="entry name" value="KLHL22_BACK"/>
</dbReference>
<dbReference type="InterPro" id="IPR011333">
    <property type="entry name" value="SKP1/BTB/POZ_sf"/>
</dbReference>
<dbReference type="PANTHER" id="PTHR45632:SF5">
    <property type="entry name" value="KELCH-LIKE PROTEIN 22"/>
    <property type="match status" value="1"/>
</dbReference>
<dbReference type="PANTHER" id="PTHR45632">
    <property type="entry name" value="LD33804P"/>
    <property type="match status" value="1"/>
</dbReference>
<dbReference type="Pfam" id="PF07707">
    <property type="entry name" value="BACK"/>
    <property type="match status" value="1"/>
</dbReference>
<dbReference type="Pfam" id="PF00651">
    <property type="entry name" value="BTB"/>
    <property type="match status" value="1"/>
</dbReference>
<dbReference type="Pfam" id="PF01344">
    <property type="entry name" value="Kelch_1"/>
    <property type="match status" value="1"/>
</dbReference>
<dbReference type="Pfam" id="PF24681">
    <property type="entry name" value="Kelch_KLHDC2_KLHL20_DRC7"/>
    <property type="match status" value="1"/>
</dbReference>
<dbReference type="PIRSF" id="PIRSF037037">
    <property type="entry name" value="Kelch-like_protein_gigaxonin"/>
    <property type="match status" value="1"/>
</dbReference>
<dbReference type="SMART" id="SM00875">
    <property type="entry name" value="BACK"/>
    <property type="match status" value="1"/>
</dbReference>
<dbReference type="SMART" id="SM00225">
    <property type="entry name" value="BTB"/>
    <property type="match status" value="1"/>
</dbReference>
<dbReference type="SMART" id="SM00612">
    <property type="entry name" value="Kelch"/>
    <property type="match status" value="6"/>
</dbReference>
<dbReference type="SUPFAM" id="SSF117281">
    <property type="entry name" value="Kelch motif"/>
    <property type="match status" value="1"/>
</dbReference>
<dbReference type="SUPFAM" id="SSF54695">
    <property type="entry name" value="POZ domain"/>
    <property type="match status" value="1"/>
</dbReference>
<dbReference type="PROSITE" id="PS50097">
    <property type="entry name" value="BTB"/>
    <property type="match status" value="1"/>
</dbReference>
<protein>
    <recommendedName>
        <fullName evidence="5">Kelch-like protein 22</fullName>
    </recommendedName>
</protein>
<feature type="initiator methionine" description="Removed" evidence="2">
    <location>
        <position position="1"/>
    </location>
</feature>
<feature type="chain" id="PRO_0000396634" description="Kelch-like protein 22">
    <location>
        <begin position="2"/>
        <end position="634"/>
    </location>
</feature>
<feature type="domain" description="BTB" evidence="3">
    <location>
        <begin position="50"/>
        <end position="117"/>
    </location>
</feature>
<feature type="repeat" description="Kelch 1">
    <location>
        <begin position="299"/>
        <end position="349"/>
    </location>
</feature>
<feature type="repeat" description="Kelch 2">
    <location>
        <begin position="350"/>
        <end position="399"/>
    </location>
</feature>
<feature type="repeat" description="Kelch 3">
    <location>
        <begin position="400"/>
        <end position="446"/>
    </location>
</feature>
<feature type="repeat" description="Kelch 4">
    <location>
        <begin position="448"/>
        <end position="493"/>
    </location>
</feature>
<feature type="repeat" description="Kelch 5">
    <location>
        <begin position="494"/>
        <end position="544"/>
    </location>
</feature>
<feature type="repeat" description="Kelch 6">
    <location>
        <begin position="545"/>
        <end position="593"/>
    </location>
</feature>
<feature type="region of interest" description="Disordered" evidence="4">
    <location>
        <begin position="600"/>
        <end position="634"/>
    </location>
</feature>
<feature type="compositionally biased region" description="Acidic residues" evidence="4">
    <location>
        <begin position="624"/>
        <end position="634"/>
    </location>
</feature>
<feature type="modified residue" description="N-acetylalanine" evidence="2">
    <location>
        <position position="2"/>
    </location>
</feature>
<feature type="modified residue" description="Phosphothreonine" evidence="1">
    <location>
        <position position="463"/>
    </location>
</feature>
<feature type="modified residue" description="Phosphotyrosine" evidence="1">
    <location>
        <position position="466"/>
    </location>
</feature>
<feature type="modified residue" description="Phosphothreonine" evidence="2">
    <location>
        <position position="605"/>
    </location>
</feature>
<reference key="1">
    <citation type="journal article" date="2010" name="Nature">
        <title>The sequence and de novo assembly of the giant panda genome.</title>
        <authorList>
            <person name="Li R."/>
            <person name="Fan W."/>
            <person name="Tian G."/>
            <person name="Zhu H."/>
            <person name="He L."/>
            <person name="Cai J."/>
            <person name="Huang Q."/>
            <person name="Cai Q."/>
            <person name="Li B."/>
            <person name="Bai Y."/>
            <person name="Zhang Z."/>
            <person name="Zhang Y."/>
            <person name="Wang W."/>
            <person name="Li J."/>
            <person name="Wei F."/>
            <person name="Li H."/>
            <person name="Jian M."/>
            <person name="Li J."/>
            <person name="Zhang Z."/>
            <person name="Nielsen R."/>
            <person name="Li D."/>
            <person name="Gu W."/>
            <person name="Yang Z."/>
            <person name="Xuan Z."/>
            <person name="Ryder O.A."/>
            <person name="Leung F.C."/>
            <person name="Zhou Y."/>
            <person name="Cao J."/>
            <person name="Sun X."/>
            <person name="Fu Y."/>
            <person name="Fang X."/>
            <person name="Guo X."/>
            <person name="Wang B."/>
            <person name="Hou R."/>
            <person name="Shen F."/>
            <person name="Mu B."/>
            <person name="Ni P."/>
            <person name="Lin R."/>
            <person name="Qian W."/>
            <person name="Wang G."/>
            <person name="Yu C."/>
            <person name="Nie W."/>
            <person name="Wang J."/>
            <person name="Wu Z."/>
            <person name="Liang H."/>
            <person name="Min J."/>
            <person name="Wu Q."/>
            <person name="Cheng S."/>
            <person name="Ruan J."/>
            <person name="Wang M."/>
            <person name="Shi Z."/>
            <person name="Wen M."/>
            <person name="Liu B."/>
            <person name="Ren X."/>
            <person name="Zheng H."/>
            <person name="Dong D."/>
            <person name="Cook K."/>
            <person name="Shan G."/>
            <person name="Zhang H."/>
            <person name="Kosiol C."/>
            <person name="Xie X."/>
            <person name="Lu Z."/>
            <person name="Zheng H."/>
            <person name="Li Y."/>
            <person name="Steiner C.C."/>
            <person name="Lam T.T."/>
            <person name="Lin S."/>
            <person name="Zhang Q."/>
            <person name="Li G."/>
            <person name="Tian J."/>
            <person name="Gong T."/>
            <person name="Liu H."/>
            <person name="Zhang D."/>
            <person name="Fang L."/>
            <person name="Ye C."/>
            <person name="Zhang J."/>
            <person name="Hu W."/>
            <person name="Xu A."/>
            <person name="Ren Y."/>
            <person name="Zhang G."/>
            <person name="Bruford M.W."/>
            <person name="Li Q."/>
            <person name="Ma L."/>
            <person name="Guo Y."/>
            <person name="An N."/>
            <person name="Hu Y."/>
            <person name="Zheng Y."/>
            <person name="Shi Y."/>
            <person name="Li Z."/>
            <person name="Liu Q."/>
            <person name="Chen Y."/>
            <person name="Zhao J."/>
            <person name="Qu N."/>
            <person name="Zhao S."/>
            <person name="Tian F."/>
            <person name="Wang X."/>
            <person name="Wang H."/>
            <person name="Xu L."/>
            <person name="Liu X."/>
            <person name="Vinar T."/>
            <person name="Wang Y."/>
            <person name="Lam T.W."/>
            <person name="Yiu S.M."/>
            <person name="Liu S."/>
            <person name="Zhang H."/>
            <person name="Li D."/>
            <person name="Huang Y."/>
            <person name="Wang X."/>
            <person name="Yang G."/>
            <person name="Jiang Z."/>
            <person name="Wang J."/>
            <person name="Qin N."/>
            <person name="Li L."/>
            <person name="Li J."/>
            <person name="Bolund L."/>
            <person name="Kristiansen K."/>
            <person name="Wong G.K."/>
            <person name="Olson M."/>
            <person name="Zhang X."/>
            <person name="Li S."/>
            <person name="Yang H."/>
            <person name="Wang J."/>
            <person name="Wang J."/>
        </authorList>
    </citation>
    <scope>NUCLEOTIDE SEQUENCE [LARGE SCALE GENOMIC DNA]</scope>
</reference>
<comment type="function">
    <text evidence="2">Substrate-specific adapter of a BCR (BTB-CUL3-RBX1) E3 ubiquitin ligase complex required for chromosome alignment and localization of PLK1 at kinetochores. The BCR(KLHL22) ubiquitin ligase complex mediates monoubiquitination of PLK1, leading to PLK1 dissociation from phosphoreceptor proteins and subsequent removal from kinetochores, allowing silencing of the spindle assembly checkpoint (SAC) and chromosome segregation. Monoubiquitination of PLK1 does not lead to PLK1 degradation. The BCR(KLHL22) ubiquitin ligase complex is also responsible for the amino acid-stimulated 'Lys-48' polyubiquitination and proteasomal degradation of DEPDC5. Through the degradation of DEPDC5, releases the GATOR1 complex-mediated inhibition of the TORC1 pathway. It is therefore an amino acid-dependent activator within the amino acid-sensing branch of the TORC1 pathway, indirectly regulating different cellular processes including cell growth and autophagy.</text>
</comment>
<comment type="pathway">
    <text evidence="2">Protein modification; protein ubiquitination.</text>
</comment>
<comment type="subunit">
    <text evidence="2">Component of the BCR(KLHL22) E3 ubiquitin ligase complex, at least composed of CUL3, KLHL22 and RBX1. Interacts with PLK1. Interacts with DEPDC5 (via DEP domain); the interaction depends on amino acid availability. Interacts with YWHAE; required for the nuclear localization of KLHL22 upon amino acid starvation.</text>
</comment>
<comment type="subcellular location">
    <subcellularLocation>
        <location evidence="2">Cytoplasm</location>
        <location evidence="2">Cytosol</location>
    </subcellularLocation>
    <subcellularLocation>
        <location evidence="2">Cytoplasm</location>
        <location evidence="2">Cytoskeleton</location>
        <location evidence="2">Microtubule organizing center</location>
        <location evidence="2">Centrosome</location>
    </subcellularLocation>
    <subcellularLocation>
        <location evidence="2">Cytoplasm</location>
        <location evidence="2">Cytoskeleton</location>
        <location evidence="2">Spindle</location>
    </subcellularLocation>
    <subcellularLocation>
        <location evidence="2">Nucleus</location>
    </subcellularLocation>
    <subcellularLocation>
        <location evidence="2">Lysosome</location>
    </subcellularLocation>
    <text evidence="2">Mainly cytoplasmic in prophase and prometaphase. Associates with the mitotic spindle as the cells reach chromosome bi-orientation. Localizes to the centrosomes shortly before cells enter anaphase After anaphase onset, predominantly associates with the polar microtubules connecting the 2 opposing centrosomes and gradually diffuses into the cytoplasm during telophase. Localizes to the nucleus upon amino acid starvation. Relocalizes to the cytosol and associates with lysosomes when amino acids are available.</text>
</comment>
<evidence type="ECO:0000250" key="1">
    <source>
        <dbReference type="UniProtKB" id="D3ZZC3"/>
    </source>
</evidence>
<evidence type="ECO:0000250" key="2">
    <source>
        <dbReference type="UniProtKB" id="Q53GT1"/>
    </source>
</evidence>
<evidence type="ECO:0000255" key="3">
    <source>
        <dbReference type="PROSITE-ProRule" id="PRU00037"/>
    </source>
</evidence>
<evidence type="ECO:0000256" key="4">
    <source>
        <dbReference type="SAM" id="MobiDB-lite"/>
    </source>
</evidence>
<evidence type="ECO:0000305" key="5"/>
<evidence type="ECO:0000312" key="6">
    <source>
        <dbReference type="EMBL" id="EFB29357.1"/>
    </source>
</evidence>
<gene>
    <name type="primary">KLHL22</name>
    <name evidence="6" type="ORF">PANDA_009375</name>
</gene>